<protein>
    <recommendedName>
        <fullName>Nuclear hormone receptor family member nhr-150</fullName>
    </recommendedName>
</protein>
<keyword id="KW-0238">DNA-binding</keyword>
<keyword id="KW-0479">Metal-binding</keyword>
<keyword id="KW-0539">Nucleus</keyword>
<keyword id="KW-0675">Receptor</keyword>
<keyword id="KW-1185">Reference proteome</keyword>
<keyword id="KW-0804">Transcription</keyword>
<keyword id="KW-0805">Transcription regulation</keyword>
<keyword id="KW-0862">Zinc</keyword>
<keyword id="KW-0863">Zinc-finger</keyword>
<dbReference type="EMBL" id="Z81463">
    <property type="protein sequence ID" value="CAB03850.1"/>
    <property type="molecule type" value="Genomic_DNA"/>
</dbReference>
<dbReference type="PIR" id="T18993">
    <property type="entry name" value="T18993"/>
</dbReference>
<dbReference type="RefSeq" id="NP_506854.1">
    <property type="nucleotide sequence ID" value="NM_074453.3"/>
</dbReference>
<dbReference type="SMR" id="O17573"/>
<dbReference type="FunCoup" id="O17573">
    <property type="interactions" value="1"/>
</dbReference>
<dbReference type="STRING" id="6239.C06B8.1.1"/>
<dbReference type="PaxDb" id="6239-C06B8.1"/>
<dbReference type="EnsemblMetazoa" id="C06B8.1.1">
    <property type="protein sequence ID" value="C06B8.1.1"/>
    <property type="gene ID" value="WBGene00007367"/>
</dbReference>
<dbReference type="GeneID" id="182297"/>
<dbReference type="KEGG" id="cel:CELE_C06B8.1"/>
<dbReference type="UCSC" id="C06B8.1">
    <property type="organism name" value="c. elegans"/>
</dbReference>
<dbReference type="AGR" id="WB:WBGene00007367"/>
<dbReference type="CTD" id="182297"/>
<dbReference type="WormBase" id="C06B8.1">
    <property type="protein sequence ID" value="CE07969"/>
    <property type="gene ID" value="WBGene00007367"/>
    <property type="gene designation" value="nhr-150"/>
</dbReference>
<dbReference type="eggNOG" id="KOG3575">
    <property type="taxonomic scope" value="Eukaryota"/>
</dbReference>
<dbReference type="GeneTree" id="ENSGT00390000009496"/>
<dbReference type="HOGENOM" id="CLU_007368_1_0_1"/>
<dbReference type="InParanoid" id="O17573"/>
<dbReference type="OrthoDB" id="5794177at2759"/>
<dbReference type="PhylomeDB" id="O17573"/>
<dbReference type="PRO" id="PR:O17573"/>
<dbReference type="Proteomes" id="UP000001940">
    <property type="component" value="Chromosome V"/>
</dbReference>
<dbReference type="Bgee" id="WBGene00007367">
    <property type="expression patterns" value="Expressed in embryo and 2 other cell types or tissues"/>
</dbReference>
<dbReference type="GO" id="GO:0005634">
    <property type="term" value="C:nucleus"/>
    <property type="evidence" value="ECO:0007669"/>
    <property type="project" value="UniProtKB-SubCell"/>
</dbReference>
<dbReference type="GO" id="GO:0003700">
    <property type="term" value="F:DNA-binding transcription factor activity"/>
    <property type="evidence" value="ECO:0007669"/>
    <property type="project" value="InterPro"/>
</dbReference>
<dbReference type="GO" id="GO:0043565">
    <property type="term" value="F:sequence-specific DNA binding"/>
    <property type="evidence" value="ECO:0007669"/>
    <property type="project" value="InterPro"/>
</dbReference>
<dbReference type="GO" id="GO:0008270">
    <property type="term" value="F:zinc ion binding"/>
    <property type="evidence" value="ECO:0007669"/>
    <property type="project" value="UniProtKB-KW"/>
</dbReference>
<dbReference type="GO" id="GO:0045087">
    <property type="term" value="P:innate immune response"/>
    <property type="evidence" value="ECO:0000318"/>
    <property type="project" value="GO_Central"/>
</dbReference>
<dbReference type="Gene3D" id="3.30.50.10">
    <property type="entry name" value="Erythroid Transcription Factor GATA-1, subunit A"/>
    <property type="match status" value="1"/>
</dbReference>
<dbReference type="Gene3D" id="1.10.565.10">
    <property type="entry name" value="Retinoid X Receptor"/>
    <property type="match status" value="1"/>
</dbReference>
<dbReference type="InterPro" id="IPR042936">
    <property type="entry name" value="Nhr-150"/>
</dbReference>
<dbReference type="InterPro" id="IPR035500">
    <property type="entry name" value="NHR-like_dom_sf"/>
</dbReference>
<dbReference type="InterPro" id="IPR000536">
    <property type="entry name" value="Nucl_hrmn_rcpt_lig-bd"/>
</dbReference>
<dbReference type="InterPro" id="IPR001628">
    <property type="entry name" value="Znf_hrmn_rcpt"/>
</dbReference>
<dbReference type="InterPro" id="IPR013088">
    <property type="entry name" value="Znf_NHR/GATA"/>
</dbReference>
<dbReference type="PANTHER" id="PTHR46800:SF2">
    <property type="entry name" value="NUCLEAR HORMONE RECEPTOR FAMILY-RELATED"/>
    <property type="match status" value="1"/>
</dbReference>
<dbReference type="PANTHER" id="PTHR46800">
    <property type="entry name" value="NUCLEAR HORMONE RECEPTOR FAMILY-RELATED-RELATED"/>
    <property type="match status" value="1"/>
</dbReference>
<dbReference type="Pfam" id="PF00104">
    <property type="entry name" value="Hormone_recep"/>
    <property type="match status" value="1"/>
</dbReference>
<dbReference type="Pfam" id="PF00105">
    <property type="entry name" value="zf-C4"/>
    <property type="match status" value="1"/>
</dbReference>
<dbReference type="PRINTS" id="PR00047">
    <property type="entry name" value="STROIDFINGER"/>
</dbReference>
<dbReference type="SMART" id="SM00430">
    <property type="entry name" value="HOLI"/>
    <property type="match status" value="1"/>
</dbReference>
<dbReference type="SMART" id="SM00399">
    <property type="entry name" value="ZnF_C4"/>
    <property type="match status" value="1"/>
</dbReference>
<dbReference type="SUPFAM" id="SSF57716">
    <property type="entry name" value="Glucocorticoid receptor-like (DNA-binding domain)"/>
    <property type="match status" value="1"/>
</dbReference>
<dbReference type="SUPFAM" id="SSF48508">
    <property type="entry name" value="Nuclear receptor ligand-binding domain"/>
    <property type="match status" value="1"/>
</dbReference>
<dbReference type="PROSITE" id="PS51843">
    <property type="entry name" value="NR_LBD"/>
    <property type="match status" value="1"/>
</dbReference>
<dbReference type="PROSITE" id="PS00031">
    <property type="entry name" value="NUCLEAR_REC_DBD_1"/>
    <property type="match status" value="1"/>
</dbReference>
<dbReference type="PROSITE" id="PS51030">
    <property type="entry name" value="NUCLEAR_REC_DBD_2"/>
    <property type="match status" value="1"/>
</dbReference>
<sequence>MCQVCGAAEADLHFGGISCRACAAFFRRFFLSKKQSKKCTCKTRILDSHPCRSCRILKCFEAGMTSKKIQSGRDKTSTKAISCISTESTSNSLSARIIPRSSLNIHGAVHLWQEFENTRACKKGTKRNALIVSTSSAGDMDSTWKMVINLFSSLGELEIKDKTALLRNFMPKFIQIDSVPYFAANIDVFKNIGRDEYESSIIDFYDGVLPETNTISKKDTIRIFEPYWNFYTNKVILPIALMKLEGPEFMALVWLLFFDNGYTNLSDKCREACRNIKKVILRELRSYQIDRNFDRNRFFEILEALQLVERGEKKFMEEMVICELLNIKIDPGFMEIIRESKL</sequence>
<accession>O17573</accession>
<comment type="function">
    <text>Orphan nuclear receptor.</text>
</comment>
<comment type="subcellular location">
    <subcellularLocation>
        <location evidence="1">Nucleus</location>
    </subcellularLocation>
</comment>
<comment type="similarity">
    <text evidence="3">Belongs to the nuclear hormone receptor family.</text>
</comment>
<proteinExistence type="inferred from homology"/>
<reference key="1">
    <citation type="journal article" date="1998" name="Science">
        <title>Genome sequence of the nematode C. elegans: a platform for investigating biology.</title>
        <authorList>
            <consortium name="The C. elegans sequencing consortium"/>
        </authorList>
    </citation>
    <scope>NUCLEOTIDE SEQUENCE [LARGE SCALE GENOMIC DNA]</scope>
    <source>
        <strain>Bristol N2</strain>
    </source>
</reference>
<name>NH150_CAEEL</name>
<gene>
    <name type="primary">nhr-150</name>
    <name type="ORF">C06B8.1</name>
</gene>
<evidence type="ECO:0000255" key="1">
    <source>
        <dbReference type="PROSITE-ProRule" id="PRU00407"/>
    </source>
</evidence>
<evidence type="ECO:0000255" key="2">
    <source>
        <dbReference type="PROSITE-ProRule" id="PRU01189"/>
    </source>
</evidence>
<evidence type="ECO:0000305" key="3"/>
<organism>
    <name type="scientific">Caenorhabditis elegans</name>
    <dbReference type="NCBI Taxonomy" id="6239"/>
    <lineage>
        <taxon>Eukaryota</taxon>
        <taxon>Metazoa</taxon>
        <taxon>Ecdysozoa</taxon>
        <taxon>Nematoda</taxon>
        <taxon>Chromadorea</taxon>
        <taxon>Rhabditida</taxon>
        <taxon>Rhabditina</taxon>
        <taxon>Rhabditomorpha</taxon>
        <taxon>Rhabditoidea</taxon>
        <taxon>Rhabditidae</taxon>
        <taxon>Peloderinae</taxon>
        <taxon>Caenorhabditis</taxon>
    </lineage>
</organism>
<feature type="chain" id="PRO_0000223596" description="Nuclear hormone receptor family member nhr-150">
    <location>
        <begin position="1"/>
        <end position="342"/>
    </location>
</feature>
<feature type="domain" description="NR LBD" evidence="2">
    <location>
        <begin position="94"/>
        <end position="341"/>
    </location>
</feature>
<feature type="DNA-binding region" description="Nuclear receptor" evidence="1">
    <location>
        <begin position="1"/>
        <end position="71"/>
    </location>
</feature>
<feature type="zinc finger region" description="NR C4-type" evidence="1">
    <location>
        <begin position="2"/>
        <end position="22"/>
    </location>
</feature>
<feature type="zinc finger region" description="NR C4-type; degenerate" evidence="1">
    <location>
        <begin position="39"/>
        <end position="54"/>
    </location>
</feature>